<name>TRMB_CHLPD</name>
<evidence type="ECO:0000250" key="1"/>
<evidence type="ECO:0000255" key="2">
    <source>
        <dbReference type="HAMAP-Rule" id="MF_01057"/>
    </source>
</evidence>
<protein>
    <recommendedName>
        <fullName evidence="2">tRNA (guanine-N(7)-)-methyltransferase</fullName>
        <ecNumber evidence="2">2.1.1.33</ecNumber>
    </recommendedName>
    <alternativeName>
        <fullName evidence="2">tRNA (guanine(46)-N(7))-methyltransferase</fullName>
    </alternativeName>
    <alternativeName>
        <fullName evidence="2">tRNA(m7G46)-methyltransferase</fullName>
    </alternativeName>
</protein>
<accession>A1BGS9</accession>
<organism>
    <name type="scientific">Chlorobium phaeobacteroides (strain DSM 266 / SMG 266 / 2430)</name>
    <dbReference type="NCBI Taxonomy" id="290317"/>
    <lineage>
        <taxon>Bacteria</taxon>
        <taxon>Pseudomonadati</taxon>
        <taxon>Chlorobiota</taxon>
        <taxon>Chlorobiia</taxon>
        <taxon>Chlorobiales</taxon>
        <taxon>Chlorobiaceae</taxon>
        <taxon>Chlorobium/Pelodictyon group</taxon>
        <taxon>Chlorobium</taxon>
    </lineage>
</organism>
<feature type="chain" id="PRO_0000288136" description="tRNA (guanine-N(7)-)-methyltransferase">
    <location>
        <begin position="1"/>
        <end position="204"/>
    </location>
</feature>
<feature type="active site" evidence="1">
    <location>
        <position position="111"/>
    </location>
</feature>
<feature type="binding site" evidence="2">
    <location>
        <position position="36"/>
    </location>
    <ligand>
        <name>S-adenosyl-L-methionine</name>
        <dbReference type="ChEBI" id="CHEBI:59789"/>
    </ligand>
</feature>
<feature type="binding site" evidence="2">
    <location>
        <position position="61"/>
    </location>
    <ligand>
        <name>S-adenosyl-L-methionine</name>
        <dbReference type="ChEBI" id="CHEBI:59789"/>
    </ligand>
</feature>
<feature type="binding site" evidence="2">
    <location>
        <position position="111"/>
    </location>
    <ligand>
        <name>S-adenosyl-L-methionine</name>
        <dbReference type="ChEBI" id="CHEBI:59789"/>
    </ligand>
</feature>
<feature type="binding site" evidence="2">
    <location>
        <position position="115"/>
    </location>
    <ligand>
        <name>substrate</name>
    </ligand>
</feature>
<feature type="binding site" evidence="2">
    <location>
        <position position="147"/>
    </location>
    <ligand>
        <name>substrate</name>
    </ligand>
</feature>
<feature type="binding site" evidence="2">
    <location>
        <begin position="177"/>
        <end position="180"/>
    </location>
    <ligand>
        <name>substrate</name>
    </ligand>
</feature>
<sequence>MFMDSRETLCENPVIITDRDAWKEINLKDAGTIEVEIGFGSGEYLLRRASEYPERLFIGIEKKPGMITEVSKRVASHNLNNIRLLESCAKDAFADLFPANSISRVYSLFPDPWPKRKHLHYRLFSSEYLRLLNNRLIFGSEALIVTDSEDYCNWMLKQLPDTGFEVENSIIPPQFDTRFERKWLEQNFNTFFRILLKKARHIET</sequence>
<dbReference type="EC" id="2.1.1.33" evidence="2"/>
<dbReference type="EMBL" id="CP000492">
    <property type="protein sequence ID" value="ABL65606.1"/>
    <property type="molecule type" value="Genomic_DNA"/>
</dbReference>
<dbReference type="SMR" id="A1BGS9"/>
<dbReference type="STRING" id="290317.Cpha266_1584"/>
<dbReference type="KEGG" id="cph:Cpha266_1584"/>
<dbReference type="eggNOG" id="COG0220">
    <property type="taxonomic scope" value="Bacteria"/>
</dbReference>
<dbReference type="HOGENOM" id="CLU_050910_0_3_10"/>
<dbReference type="OrthoDB" id="9802090at2"/>
<dbReference type="UniPathway" id="UPA00989"/>
<dbReference type="Proteomes" id="UP000008701">
    <property type="component" value="Chromosome"/>
</dbReference>
<dbReference type="GO" id="GO:0043527">
    <property type="term" value="C:tRNA methyltransferase complex"/>
    <property type="evidence" value="ECO:0007669"/>
    <property type="project" value="TreeGrafter"/>
</dbReference>
<dbReference type="GO" id="GO:0008176">
    <property type="term" value="F:tRNA (guanine(46)-N7)-methyltransferase activity"/>
    <property type="evidence" value="ECO:0007669"/>
    <property type="project" value="UniProtKB-UniRule"/>
</dbReference>
<dbReference type="CDD" id="cd02440">
    <property type="entry name" value="AdoMet_MTases"/>
    <property type="match status" value="1"/>
</dbReference>
<dbReference type="Gene3D" id="3.40.50.150">
    <property type="entry name" value="Vaccinia Virus protein VP39"/>
    <property type="match status" value="1"/>
</dbReference>
<dbReference type="HAMAP" id="MF_01057">
    <property type="entry name" value="tRNA_methyltr_TrmB"/>
    <property type="match status" value="1"/>
</dbReference>
<dbReference type="InterPro" id="IPR029063">
    <property type="entry name" value="SAM-dependent_MTases_sf"/>
</dbReference>
<dbReference type="InterPro" id="IPR003358">
    <property type="entry name" value="tRNA_(Gua-N-7)_MeTrfase_Trmb"/>
</dbReference>
<dbReference type="InterPro" id="IPR055361">
    <property type="entry name" value="tRNA_methyltr_TrmB_bact"/>
</dbReference>
<dbReference type="PANTHER" id="PTHR23417">
    <property type="entry name" value="3-DEOXY-D-MANNO-OCTULOSONIC-ACID TRANSFERASE/TRNA GUANINE-N 7 - -METHYLTRANSFERASE"/>
    <property type="match status" value="1"/>
</dbReference>
<dbReference type="PANTHER" id="PTHR23417:SF14">
    <property type="entry name" value="PENTACOTRIPEPTIDE-REPEAT REGION OF PRORP DOMAIN-CONTAINING PROTEIN"/>
    <property type="match status" value="1"/>
</dbReference>
<dbReference type="Pfam" id="PF02390">
    <property type="entry name" value="Methyltransf_4"/>
    <property type="match status" value="1"/>
</dbReference>
<dbReference type="SUPFAM" id="SSF53335">
    <property type="entry name" value="S-adenosyl-L-methionine-dependent methyltransferases"/>
    <property type="match status" value="1"/>
</dbReference>
<dbReference type="PROSITE" id="PS51625">
    <property type="entry name" value="SAM_MT_TRMB"/>
    <property type="match status" value="1"/>
</dbReference>
<reference key="1">
    <citation type="submission" date="2006-12" db="EMBL/GenBank/DDBJ databases">
        <title>Complete sequence of Chlorobium phaeobacteroides DSM 266.</title>
        <authorList>
            <consortium name="US DOE Joint Genome Institute"/>
            <person name="Copeland A."/>
            <person name="Lucas S."/>
            <person name="Lapidus A."/>
            <person name="Barry K."/>
            <person name="Detter J.C."/>
            <person name="Glavina del Rio T."/>
            <person name="Hammon N."/>
            <person name="Israni S."/>
            <person name="Pitluck S."/>
            <person name="Goltsman E."/>
            <person name="Schmutz J."/>
            <person name="Larimer F."/>
            <person name="Land M."/>
            <person name="Hauser L."/>
            <person name="Mikhailova N."/>
            <person name="Li T."/>
            <person name="Overmann J."/>
            <person name="Bryant D.A."/>
            <person name="Richardson P."/>
        </authorList>
    </citation>
    <scope>NUCLEOTIDE SEQUENCE [LARGE SCALE GENOMIC DNA]</scope>
    <source>
        <strain>DSM 266 / SMG 266 / 2430</strain>
    </source>
</reference>
<keyword id="KW-0489">Methyltransferase</keyword>
<keyword id="KW-1185">Reference proteome</keyword>
<keyword id="KW-0949">S-adenosyl-L-methionine</keyword>
<keyword id="KW-0808">Transferase</keyword>
<keyword id="KW-0819">tRNA processing</keyword>
<proteinExistence type="inferred from homology"/>
<comment type="function">
    <text evidence="2">Catalyzes the formation of N(7)-methylguanine at position 46 (m7G46) in tRNA.</text>
</comment>
<comment type="catalytic activity">
    <reaction evidence="2">
        <text>guanosine(46) in tRNA + S-adenosyl-L-methionine = N(7)-methylguanosine(46) in tRNA + S-adenosyl-L-homocysteine</text>
        <dbReference type="Rhea" id="RHEA:42708"/>
        <dbReference type="Rhea" id="RHEA-COMP:10188"/>
        <dbReference type="Rhea" id="RHEA-COMP:10189"/>
        <dbReference type="ChEBI" id="CHEBI:57856"/>
        <dbReference type="ChEBI" id="CHEBI:59789"/>
        <dbReference type="ChEBI" id="CHEBI:74269"/>
        <dbReference type="ChEBI" id="CHEBI:74480"/>
        <dbReference type="EC" id="2.1.1.33"/>
    </reaction>
</comment>
<comment type="pathway">
    <text evidence="2">tRNA modification; N(7)-methylguanine-tRNA biosynthesis.</text>
</comment>
<comment type="similarity">
    <text evidence="2">Belongs to the class I-like SAM-binding methyltransferase superfamily. TrmB family.</text>
</comment>
<gene>
    <name evidence="2" type="primary">trmB</name>
    <name type="ordered locus">Cpha266_1584</name>
</gene>